<proteinExistence type="inferred from homology"/>
<keyword id="KW-0028">Amino-acid biosynthesis</keyword>
<keyword id="KW-0210">Decarboxylase</keyword>
<keyword id="KW-0456">Lyase</keyword>
<keyword id="KW-0457">Lysine biosynthesis</keyword>
<keyword id="KW-0663">Pyridoxal phosphate</keyword>
<keyword id="KW-1185">Reference proteome</keyword>
<sequence>MLSTEMPLPTTGSTLLKTPASPSPNQNLLPLTAVINKNGELEIGGCSVPALVEQFGSPLYILDETTLRQAAQQYRQSFQAHYPGSSQVIYASKAWSCLAVVAIAAQEGLGFDVVSGGELFTTVSALKQLGWDEAEIAEKIYFHGNNKSVQELQEAIAINCTIIVDNWLELETLTKLAADSGAPVKIMLRLTPGIECHTHEYIKTGHLDSKFGFDPNQLEAVFTYIAQQPSLHCLGLHAHIGSQIFERQPHKDLGEVLVQWFTKGLTYGLPLTELNIGGGLGICYTESDDPPSIEEWAQVAAISVAKACDRQNIPYPKLIAEPGRSLVGSACVTAYRVGGRKVVPNIRTYISVDGGMSDNPRPITYQSVYRVALANRMNDEITETVTVAGKHCESGDILVKDVALPAAEPGDIMVVAATGAYNHSMASNYNRLGRPAAVLVNQGQANLILQRETYTDLLRQDCLPNRLLS</sequence>
<reference key="1">
    <citation type="journal article" date="1995" name="DNA Res.">
        <title>Sequence analysis of the genome of the unicellular cyanobacterium Synechocystis sp. strain PCC6803. I. Sequence features in the 1 Mb region from map positions 64% to 92% of the genome.</title>
        <authorList>
            <person name="Kaneko T."/>
            <person name="Tanaka A."/>
            <person name="Sato S."/>
            <person name="Kotani H."/>
            <person name="Sazuka T."/>
            <person name="Miyajima N."/>
            <person name="Sugiura M."/>
            <person name="Tabata S."/>
        </authorList>
    </citation>
    <scope>NUCLEOTIDE SEQUENCE [LARGE SCALE GENOMIC DNA]</scope>
    <source>
        <strain>ATCC 27184 / PCC 6803 / N-1</strain>
    </source>
</reference>
<reference key="2">
    <citation type="journal article" date="1996" name="DNA Res.">
        <title>Sequence analysis of the genome of the unicellular cyanobacterium Synechocystis sp. strain PCC6803. II. Sequence determination of the entire genome and assignment of potential protein-coding regions.</title>
        <authorList>
            <person name="Kaneko T."/>
            <person name="Sato S."/>
            <person name="Kotani H."/>
            <person name="Tanaka A."/>
            <person name="Asamizu E."/>
            <person name="Nakamura Y."/>
            <person name="Miyajima N."/>
            <person name="Hirosawa M."/>
            <person name="Sugiura M."/>
            <person name="Sasamoto S."/>
            <person name="Kimura T."/>
            <person name="Hosouchi T."/>
            <person name="Matsuno A."/>
            <person name="Muraki A."/>
            <person name="Nakazaki N."/>
            <person name="Naruo K."/>
            <person name="Okumura S."/>
            <person name="Shimpo S."/>
            <person name="Takeuchi C."/>
            <person name="Wada T."/>
            <person name="Watanabe A."/>
            <person name="Yamada M."/>
            <person name="Yasuda M."/>
            <person name="Tabata S."/>
        </authorList>
    </citation>
    <scope>NUCLEOTIDE SEQUENCE [LARGE SCALE GENOMIC DNA]</scope>
    <source>
        <strain>ATCC 27184 / PCC 6803 / Kazusa</strain>
    </source>
</reference>
<evidence type="ECO:0000255" key="1"/>
<evidence type="ECO:0000255" key="2">
    <source>
        <dbReference type="HAMAP-Rule" id="MF_02120"/>
    </source>
</evidence>
<evidence type="ECO:0000256" key="3">
    <source>
        <dbReference type="SAM" id="MobiDB-lite"/>
    </source>
</evidence>
<protein>
    <recommendedName>
        <fullName evidence="2">Diaminopimelate decarboxylase</fullName>
        <shortName evidence="2">DAP decarboxylase</shortName>
        <shortName evidence="2">DAPDC</shortName>
        <ecNumber evidence="2">4.1.1.20</ecNumber>
    </recommendedName>
</protein>
<name>DCDA_SYNY3</name>
<organism>
    <name type="scientific">Synechocystis sp. (strain ATCC 27184 / PCC 6803 / Kazusa)</name>
    <dbReference type="NCBI Taxonomy" id="1111708"/>
    <lineage>
        <taxon>Bacteria</taxon>
        <taxon>Bacillati</taxon>
        <taxon>Cyanobacteriota</taxon>
        <taxon>Cyanophyceae</taxon>
        <taxon>Synechococcales</taxon>
        <taxon>Merismopediaceae</taxon>
        <taxon>Synechocystis</taxon>
    </lineage>
</organism>
<comment type="function">
    <text evidence="2">Specifically catalyzes the decarboxylation of meso-diaminopimelate (meso-DAP) to L-lysine.</text>
</comment>
<comment type="catalytic activity">
    <reaction evidence="2">
        <text>meso-2,6-diaminopimelate + H(+) = L-lysine + CO2</text>
        <dbReference type="Rhea" id="RHEA:15101"/>
        <dbReference type="ChEBI" id="CHEBI:15378"/>
        <dbReference type="ChEBI" id="CHEBI:16526"/>
        <dbReference type="ChEBI" id="CHEBI:32551"/>
        <dbReference type="ChEBI" id="CHEBI:57791"/>
        <dbReference type="EC" id="4.1.1.20"/>
    </reaction>
</comment>
<comment type="cofactor">
    <cofactor evidence="2">
        <name>pyridoxal 5'-phosphate</name>
        <dbReference type="ChEBI" id="CHEBI:597326"/>
    </cofactor>
</comment>
<comment type="pathway">
    <text evidence="2">Amino-acid biosynthesis; L-lysine biosynthesis via DAP pathway; L-lysine from DL-2,6-diaminopimelate: step 1/1.</text>
</comment>
<comment type="subunit">
    <text evidence="2">Homodimer.</text>
</comment>
<comment type="similarity">
    <text evidence="2">Belongs to the Orn/Lys/Arg decarboxylase class-II family. LysA subfamily.</text>
</comment>
<gene>
    <name evidence="2" type="primary">lysA</name>
    <name type="ordered locus">sll0504</name>
</gene>
<dbReference type="EC" id="4.1.1.20" evidence="2"/>
<dbReference type="EMBL" id="BA000022">
    <property type="protein sequence ID" value="BAA10831.1"/>
    <property type="molecule type" value="Genomic_DNA"/>
</dbReference>
<dbReference type="PIR" id="S75984">
    <property type="entry name" value="S75984"/>
</dbReference>
<dbReference type="SMR" id="Q55484"/>
<dbReference type="FunCoup" id="Q55484">
    <property type="interactions" value="338"/>
</dbReference>
<dbReference type="IntAct" id="Q55484">
    <property type="interactions" value="2"/>
</dbReference>
<dbReference type="STRING" id="1148.gene:10500335"/>
<dbReference type="PaxDb" id="1148-1001344"/>
<dbReference type="EnsemblBacteria" id="BAA10831">
    <property type="protein sequence ID" value="BAA10831"/>
    <property type="gene ID" value="BAA10831"/>
</dbReference>
<dbReference type="KEGG" id="syn:sll0504"/>
<dbReference type="eggNOG" id="COG0019">
    <property type="taxonomic scope" value="Bacteria"/>
</dbReference>
<dbReference type="InParanoid" id="Q55484"/>
<dbReference type="PhylomeDB" id="Q55484"/>
<dbReference type="UniPathway" id="UPA00034">
    <property type="reaction ID" value="UER00027"/>
</dbReference>
<dbReference type="Proteomes" id="UP000001425">
    <property type="component" value="Chromosome"/>
</dbReference>
<dbReference type="GO" id="GO:0008836">
    <property type="term" value="F:diaminopimelate decarboxylase activity"/>
    <property type="evidence" value="ECO:0000318"/>
    <property type="project" value="GO_Central"/>
</dbReference>
<dbReference type="GO" id="GO:0030170">
    <property type="term" value="F:pyridoxal phosphate binding"/>
    <property type="evidence" value="ECO:0007669"/>
    <property type="project" value="UniProtKB-UniRule"/>
</dbReference>
<dbReference type="GO" id="GO:0009089">
    <property type="term" value="P:lysine biosynthetic process via diaminopimelate"/>
    <property type="evidence" value="ECO:0000318"/>
    <property type="project" value="GO_Central"/>
</dbReference>
<dbReference type="CDD" id="cd06828">
    <property type="entry name" value="PLPDE_III_DapDC"/>
    <property type="match status" value="1"/>
</dbReference>
<dbReference type="FunFam" id="3.20.20.10:FF:000003">
    <property type="entry name" value="Diaminopimelate decarboxylase"/>
    <property type="match status" value="1"/>
</dbReference>
<dbReference type="Gene3D" id="3.20.20.10">
    <property type="entry name" value="Alanine racemase"/>
    <property type="match status" value="1"/>
</dbReference>
<dbReference type="Gene3D" id="2.40.37.10">
    <property type="entry name" value="Lyase, Ornithine Decarboxylase, Chain A, domain 1"/>
    <property type="match status" value="1"/>
</dbReference>
<dbReference type="HAMAP" id="MF_02120">
    <property type="entry name" value="LysA"/>
    <property type="match status" value="1"/>
</dbReference>
<dbReference type="InterPro" id="IPR009006">
    <property type="entry name" value="Ala_racemase/Decarboxylase_C"/>
</dbReference>
<dbReference type="InterPro" id="IPR002986">
    <property type="entry name" value="DAP_deCOOHase_LysA"/>
</dbReference>
<dbReference type="InterPro" id="IPR022643">
    <property type="entry name" value="De-COase2_C"/>
</dbReference>
<dbReference type="InterPro" id="IPR022644">
    <property type="entry name" value="De-COase2_N"/>
</dbReference>
<dbReference type="InterPro" id="IPR022653">
    <property type="entry name" value="De-COase2_pyr-phos_BS"/>
</dbReference>
<dbReference type="InterPro" id="IPR000183">
    <property type="entry name" value="Orn/DAP/Arg_de-COase"/>
</dbReference>
<dbReference type="InterPro" id="IPR029066">
    <property type="entry name" value="PLP-binding_barrel"/>
</dbReference>
<dbReference type="NCBIfam" id="TIGR01048">
    <property type="entry name" value="lysA"/>
    <property type="match status" value="1"/>
</dbReference>
<dbReference type="PANTHER" id="PTHR43727">
    <property type="entry name" value="DIAMINOPIMELATE DECARBOXYLASE"/>
    <property type="match status" value="1"/>
</dbReference>
<dbReference type="PANTHER" id="PTHR43727:SF2">
    <property type="entry name" value="GROUP IV DECARBOXYLASE"/>
    <property type="match status" value="1"/>
</dbReference>
<dbReference type="Pfam" id="PF02784">
    <property type="entry name" value="Orn_Arg_deC_N"/>
    <property type="match status" value="1"/>
</dbReference>
<dbReference type="Pfam" id="PF00278">
    <property type="entry name" value="Orn_DAP_Arg_deC"/>
    <property type="match status" value="1"/>
</dbReference>
<dbReference type="PRINTS" id="PR01181">
    <property type="entry name" value="DAPDCRBXLASE"/>
</dbReference>
<dbReference type="PRINTS" id="PR01179">
    <property type="entry name" value="ODADCRBXLASE"/>
</dbReference>
<dbReference type="SUPFAM" id="SSF50621">
    <property type="entry name" value="Alanine racemase C-terminal domain-like"/>
    <property type="match status" value="1"/>
</dbReference>
<dbReference type="SUPFAM" id="SSF51419">
    <property type="entry name" value="PLP-binding barrel"/>
    <property type="match status" value="1"/>
</dbReference>
<dbReference type="PROSITE" id="PS00878">
    <property type="entry name" value="ODR_DC_2_1"/>
    <property type="match status" value="1"/>
</dbReference>
<dbReference type="PROSITE" id="PS00879">
    <property type="entry name" value="ODR_DC_2_2"/>
    <property type="match status" value="1"/>
</dbReference>
<accession>Q55484</accession>
<feature type="chain" id="PRO_0000149936" description="Diaminopimelate decarboxylase">
    <location>
        <begin position="1"/>
        <end position="469"/>
    </location>
</feature>
<feature type="region of interest" description="Disordered" evidence="3">
    <location>
        <begin position="1"/>
        <end position="23"/>
    </location>
</feature>
<feature type="active site" description="Proton donor" evidence="1">
    <location>
        <position position="392"/>
    </location>
</feature>
<feature type="binding site" evidence="2">
    <location>
        <position position="279"/>
    </location>
    <ligand>
        <name>pyridoxal 5'-phosphate</name>
        <dbReference type="ChEBI" id="CHEBI:597326"/>
    </ligand>
</feature>
<feature type="binding site" evidence="2">
    <location>
        <begin position="321"/>
        <end position="324"/>
    </location>
    <ligand>
        <name>pyridoxal 5'-phosphate</name>
        <dbReference type="ChEBI" id="CHEBI:597326"/>
    </ligand>
</feature>
<feature type="binding site" evidence="2">
    <location>
        <position position="324"/>
    </location>
    <ligand>
        <name>substrate</name>
    </ligand>
</feature>
<feature type="binding site" evidence="2">
    <location>
        <position position="361"/>
    </location>
    <ligand>
        <name>substrate</name>
    </ligand>
</feature>
<feature type="binding site" evidence="2">
    <location>
        <position position="365"/>
    </location>
    <ligand>
        <name>substrate</name>
    </ligand>
</feature>
<feature type="binding site" evidence="2">
    <location>
        <position position="393"/>
    </location>
    <ligand>
        <name>substrate</name>
    </ligand>
</feature>
<feature type="binding site" evidence="2">
    <location>
        <position position="421"/>
    </location>
    <ligand>
        <name>pyridoxal 5'-phosphate</name>
        <dbReference type="ChEBI" id="CHEBI:597326"/>
    </ligand>
</feature>
<feature type="binding site" evidence="2">
    <location>
        <position position="421"/>
    </location>
    <ligand>
        <name>substrate</name>
    </ligand>
</feature>
<feature type="modified residue" description="N6-(pyridoxal phosphate)lysine" evidence="2">
    <location>
        <position position="93"/>
    </location>
</feature>